<accession>Q89AS5</accession>
<proteinExistence type="inferred from homology"/>
<reference key="1">
    <citation type="journal article" date="2003" name="Proc. Natl. Acad. Sci. U.S.A.">
        <title>Reductive genome evolution in Buchnera aphidicola.</title>
        <authorList>
            <person name="van Ham R.C.H.J."/>
            <person name="Kamerbeek J."/>
            <person name="Palacios C."/>
            <person name="Rausell C."/>
            <person name="Abascal F."/>
            <person name="Bastolla U."/>
            <person name="Fernandez J.M."/>
            <person name="Jimenez L."/>
            <person name="Postigo M."/>
            <person name="Silva F.J."/>
            <person name="Tamames J."/>
            <person name="Viguera E."/>
            <person name="Latorre A."/>
            <person name="Valencia A."/>
            <person name="Moran F."/>
            <person name="Moya A."/>
        </authorList>
    </citation>
    <scope>NUCLEOTIDE SEQUENCE [LARGE SCALE GENOMIC DNA]</scope>
    <source>
        <strain>Bp</strain>
    </source>
</reference>
<protein>
    <recommendedName>
        <fullName>Ribonucleoside-diphosphate reductase subunit beta</fullName>
        <ecNumber>1.17.4.1</ecNumber>
    </recommendedName>
    <alternativeName>
        <fullName>Ribonucleotide reductase small subunit</fullName>
    </alternativeName>
</protein>
<dbReference type="EC" id="1.17.4.1"/>
<dbReference type="EMBL" id="AE016826">
    <property type="protein sequence ID" value="AAO26900.1"/>
    <property type="molecule type" value="Genomic_DNA"/>
</dbReference>
<dbReference type="RefSeq" id="WP_011091301.1">
    <property type="nucleotide sequence ID" value="NC_004545.1"/>
</dbReference>
<dbReference type="SMR" id="Q89AS5"/>
<dbReference type="STRING" id="224915.bbp_167"/>
<dbReference type="KEGG" id="bab:bbp_167"/>
<dbReference type="eggNOG" id="COG0208">
    <property type="taxonomic scope" value="Bacteria"/>
</dbReference>
<dbReference type="HOGENOM" id="CLU_062403_0_0_6"/>
<dbReference type="OrthoDB" id="9765051at2"/>
<dbReference type="Proteomes" id="UP000000601">
    <property type="component" value="Chromosome"/>
</dbReference>
<dbReference type="GO" id="GO:0046872">
    <property type="term" value="F:metal ion binding"/>
    <property type="evidence" value="ECO:0007669"/>
    <property type="project" value="UniProtKB-KW"/>
</dbReference>
<dbReference type="GO" id="GO:0004748">
    <property type="term" value="F:ribonucleoside-diphosphate reductase activity, thioredoxin disulfide as acceptor"/>
    <property type="evidence" value="ECO:0007669"/>
    <property type="project" value="UniProtKB-EC"/>
</dbReference>
<dbReference type="GO" id="GO:0009263">
    <property type="term" value="P:deoxyribonucleotide biosynthetic process"/>
    <property type="evidence" value="ECO:0007669"/>
    <property type="project" value="UniProtKB-KW"/>
</dbReference>
<dbReference type="CDD" id="cd01049">
    <property type="entry name" value="RNRR2"/>
    <property type="match status" value="1"/>
</dbReference>
<dbReference type="FunFam" id="1.10.620.20:FF:000001">
    <property type="entry name" value="Ribonucleoside-diphosphate reductase 1 subunit beta"/>
    <property type="match status" value="1"/>
</dbReference>
<dbReference type="Gene3D" id="1.10.620.20">
    <property type="entry name" value="Ribonucleotide Reductase, subunit A"/>
    <property type="match status" value="1"/>
</dbReference>
<dbReference type="InterPro" id="IPR009078">
    <property type="entry name" value="Ferritin-like_SF"/>
</dbReference>
<dbReference type="InterPro" id="IPR012348">
    <property type="entry name" value="RNR-like"/>
</dbReference>
<dbReference type="InterPro" id="IPR033909">
    <property type="entry name" value="RNR_small"/>
</dbReference>
<dbReference type="InterPro" id="IPR030475">
    <property type="entry name" value="RNR_small_AS"/>
</dbReference>
<dbReference type="InterPro" id="IPR000358">
    <property type="entry name" value="RNR_small_fam"/>
</dbReference>
<dbReference type="NCBIfam" id="NF006576">
    <property type="entry name" value="PRK09101.1"/>
    <property type="match status" value="1"/>
</dbReference>
<dbReference type="PANTHER" id="PTHR23409">
    <property type="entry name" value="RIBONUCLEOSIDE-DIPHOSPHATE REDUCTASE SMALL CHAIN"/>
    <property type="match status" value="1"/>
</dbReference>
<dbReference type="PANTHER" id="PTHR23409:SF18">
    <property type="entry name" value="RIBONUCLEOSIDE-DIPHOSPHATE REDUCTASE SUBUNIT M2"/>
    <property type="match status" value="1"/>
</dbReference>
<dbReference type="Pfam" id="PF00268">
    <property type="entry name" value="Ribonuc_red_sm"/>
    <property type="match status" value="1"/>
</dbReference>
<dbReference type="SUPFAM" id="SSF47240">
    <property type="entry name" value="Ferritin-like"/>
    <property type="match status" value="1"/>
</dbReference>
<dbReference type="PROSITE" id="PS00368">
    <property type="entry name" value="RIBORED_SMALL"/>
    <property type="match status" value="1"/>
</dbReference>
<name>RIR2_BUCBP</name>
<comment type="function">
    <text evidence="1">Provides the precursors necessary for DNA synthesis. Catalyzes the biosynthesis of deoxyribonucleotides from the corresponding ribonucleotides (By similarity).</text>
</comment>
<comment type="catalytic activity">
    <reaction evidence="2">
        <text>a 2'-deoxyribonucleoside 5'-diphosphate + [thioredoxin]-disulfide + H2O = a ribonucleoside 5'-diphosphate + [thioredoxin]-dithiol</text>
        <dbReference type="Rhea" id="RHEA:23252"/>
        <dbReference type="Rhea" id="RHEA-COMP:10698"/>
        <dbReference type="Rhea" id="RHEA-COMP:10700"/>
        <dbReference type="ChEBI" id="CHEBI:15377"/>
        <dbReference type="ChEBI" id="CHEBI:29950"/>
        <dbReference type="ChEBI" id="CHEBI:50058"/>
        <dbReference type="ChEBI" id="CHEBI:57930"/>
        <dbReference type="ChEBI" id="CHEBI:73316"/>
        <dbReference type="EC" id="1.17.4.1"/>
    </reaction>
</comment>
<comment type="cofactor">
    <cofactor evidence="1">
        <name>Fe cation</name>
        <dbReference type="ChEBI" id="CHEBI:24875"/>
    </cofactor>
    <text evidence="1">Binds 2 iron ions per subunit.</text>
</comment>
<comment type="subunit">
    <text evidence="1">Tetramer of two alpha and two beta subunits.</text>
</comment>
<comment type="similarity">
    <text evidence="3">Belongs to the ribonucleoside diphosphate reductase small chain family.</text>
</comment>
<organism>
    <name type="scientific">Buchnera aphidicola subsp. Baizongia pistaciae (strain Bp)</name>
    <dbReference type="NCBI Taxonomy" id="224915"/>
    <lineage>
        <taxon>Bacteria</taxon>
        <taxon>Pseudomonadati</taxon>
        <taxon>Pseudomonadota</taxon>
        <taxon>Gammaproteobacteria</taxon>
        <taxon>Enterobacterales</taxon>
        <taxon>Erwiniaceae</taxon>
        <taxon>Buchnera</taxon>
    </lineage>
</organism>
<evidence type="ECO:0000250" key="1"/>
<evidence type="ECO:0000255" key="2">
    <source>
        <dbReference type="PROSITE-ProRule" id="PRU10014"/>
    </source>
</evidence>
<evidence type="ECO:0000305" key="3"/>
<gene>
    <name type="primary">nrdB</name>
    <name type="ordered locus">bbp_167</name>
</gene>
<feature type="chain" id="PRO_0000190472" description="Ribonucleoside-diphosphate reductase subunit beta">
    <location>
        <begin position="1"/>
        <end position="376"/>
    </location>
</feature>
<feature type="active site" evidence="2">
    <location>
        <position position="123"/>
    </location>
</feature>
<feature type="binding site" evidence="2">
    <location>
        <position position="85"/>
    </location>
    <ligand>
        <name>Fe cation</name>
        <dbReference type="ChEBI" id="CHEBI:24875"/>
        <label>1</label>
    </ligand>
</feature>
<feature type="binding site" evidence="2">
    <location>
        <position position="116"/>
    </location>
    <ligand>
        <name>Fe cation</name>
        <dbReference type="ChEBI" id="CHEBI:24875"/>
        <label>1</label>
    </ligand>
</feature>
<feature type="binding site" evidence="1">
    <location>
        <position position="116"/>
    </location>
    <ligand>
        <name>Fe cation</name>
        <dbReference type="ChEBI" id="CHEBI:24875"/>
        <label>2</label>
    </ligand>
</feature>
<feature type="binding site" evidence="2">
    <location>
        <position position="119"/>
    </location>
    <ligand>
        <name>Fe cation</name>
        <dbReference type="ChEBI" id="CHEBI:24875"/>
        <label>1</label>
    </ligand>
</feature>
<feature type="binding site" evidence="1">
    <location>
        <position position="205"/>
    </location>
    <ligand>
        <name>Fe cation</name>
        <dbReference type="ChEBI" id="CHEBI:24875"/>
        <label>2</label>
    </ligand>
</feature>
<feature type="binding site" evidence="1">
    <location>
        <position position="239"/>
    </location>
    <ligand>
        <name>Fe cation</name>
        <dbReference type="ChEBI" id="CHEBI:24875"/>
        <label>2</label>
    </ligand>
</feature>
<feature type="binding site" evidence="1">
    <location>
        <position position="242"/>
    </location>
    <ligand>
        <name>Fe cation</name>
        <dbReference type="ChEBI" id="CHEBI:24875"/>
        <label>2</label>
    </ligand>
</feature>
<sequence length="376" mass="44123">MTYTTFSKNKNNQLYEPMFFGQSVNISRYDQQKYEIFEKLIEKQLSFFWRPEEVDLSRDYIDFQNLPQHEKHIFVSNLKYQTLLDSIQGRSPNIALLPIVSLPELETWIETWSFSETIHSRSYTHIIRNIINTPSLIFDDIIDNKNIANRAKDIAKYYDDLIELTSYWHLFGEGKHTINGKKIKIDLHELKKKLYLCLISVNALEAIRFYVSFACSFAFAEREKMEGNAKIIRLIARDEALHLTSTQHILNILHNDKNNEGMSDISKECYEECYHLFIRVSDQEKIWAKYLFQNGSMLGLNQEILSQYIEYITNIRMKAIGLPSPFKILSNPIPWINSWLISDNVQVAPQEISVSSYLIGQINSEINDSDFEKFKL</sequence>
<keyword id="KW-0215">Deoxyribonucleotide synthesis</keyword>
<keyword id="KW-0408">Iron</keyword>
<keyword id="KW-0479">Metal-binding</keyword>
<keyword id="KW-0560">Oxidoreductase</keyword>
<keyword id="KW-1185">Reference proteome</keyword>